<proteinExistence type="evidence at protein level"/>
<protein>
    <recommendedName>
        <fullName evidence="4">Thioesterase frbD</fullName>
        <ecNumber evidence="6">3.1.-.-</ecNumber>
    </recommendedName>
    <alternativeName>
        <fullName evidence="4">FR901469 biosynthesis cluster protein D</fullName>
    </alternativeName>
</protein>
<accession>A0A0S6XGG4</accession>
<organism>
    <name type="scientific">Dothideomycetidae sp. (strain 11243)</name>
    <name type="common">Fungal sp. (strain No.11243)</name>
    <dbReference type="NCBI Taxonomy" id="1603295"/>
    <lineage>
        <taxon>Eukaryota</taxon>
        <taxon>Fungi</taxon>
        <taxon>Dikarya</taxon>
        <taxon>Ascomycota</taxon>
        <taxon>Pezizomycotina</taxon>
        <taxon>Dothideomycetes</taxon>
        <taxon>Dothideomycetidae</taxon>
    </lineage>
</organism>
<keyword id="KW-0378">Hydrolase</keyword>
<keyword id="KW-1185">Reference proteome</keyword>
<gene>
    <name evidence="4" type="primary">frbD</name>
    <name type="ORF">ANO11243_029880</name>
</gene>
<dbReference type="EC" id="3.1.-.-" evidence="6"/>
<dbReference type="EMBL" id="DF938583">
    <property type="protein sequence ID" value="GAM84985.1"/>
    <property type="molecule type" value="Genomic_DNA"/>
</dbReference>
<dbReference type="SMR" id="A0A0S6XGG4"/>
<dbReference type="STRING" id="1603295.A0A0S6XGG4"/>
<dbReference type="ESTHER" id="blob1-frbd">
    <property type="family name" value="Thioesterase"/>
</dbReference>
<dbReference type="OrthoDB" id="10253869at2759"/>
<dbReference type="Proteomes" id="UP000054361">
    <property type="component" value="Unassembled WGS sequence"/>
</dbReference>
<dbReference type="GO" id="GO:0016787">
    <property type="term" value="F:hydrolase activity"/>
    <property type="evidence" value="ECO:0007669"/>
    <property type="project" value="UniProtKB-KW"/>
</dbReference>
<dbReference type="GO" id="GO:0009058">
    <property type="term" value="P:biosynthetic process"/>
    <property type="evidence" value="ECO:0007669"/>
    <property type="project" value="InterPro"/>
</dbReference>
<dbReference type="Gene3D" id="3.40.50.1820">
    <property type="entry name" value="alpha/beta hydrolase"/>
    <property type="match status" value="1"/>
</dbReference>
<dbReference type="InterPro" id="IPR029058">
    <property type="entry name" value="AB_hydrolase_fold"/>
</dbReference>
<dbReference type="InterPro" id="IPR001031">
    <property type="entry name" value="Thioesterase"/>
</dbReference>
<dbReference type="Pfam" id="PF00975">
    <property type="entry name" value="Thioesterase"/>
    <property type="match status" value="1"/>
</dbReference>
<dbReference type="SUPFAM" id="SSF53474">
    <property type="entry name" value="alpha/beta-Hydrolases"/>
    <property type="match status" value="1"/>
</dbReference>
<comment type="function">
    <text evidence="3 6">Thioesterase; part of the gene cluster that mediates the biosynthesis of the antifungal antibiotic FR901469, an inhibitor of beta-1,3-glucansynthase, exerting antifungal activity against the pathogenes Candida albicans and Aspergillus fumigatus (PubMed:27660098). FR901469 is a cyclic depsipeptide containing 12 amino acid residues and a fatty acid chain (PubMed:27660098). The NRPS frbI contains 12 modules responsible for the formation of the depsipeptide backbone which is denoted as Acyl-Thr-Ala-Tyr-Val-4OHPro-Thr-Thr-3OHPro-threo3OHGln-Gly-Thr-Orn-OH (C71H116N14O23) (Probable). The PKS frbB is probably involved in the production of the hydrocarbon chain, and the acyl-CoA ligase frbC might be involved in the transport of the chain to the peptide ptoduct of frbI (Probable). Because FR901469 contains 3 hydroxylated amino acid residues, the 3 oxygenases frbA, frbH, and frbJ might be participating in amino acid hydroxylation (Probable). As no thioesterase domains were detected in frbI or frbB, the thioesterases frbD and frbE may instead release and cyclize the products of the NRPS and PKS, respectively (Probable).</text>
</comment>
<comment type="pathway">
    <text evidence="6">Antifungal biosynthesis.</text>
</comment>
<comment type="biotechnology">
    <text evidence="1 2">FR901469 inhibits the activity of 1,3-beta-glucan synthase from Candida albicans and Aspergillus fumigatus (PubMed:11099224, PubMed:11099225). With minimal inhibitory concentrations (MICs) against Candida albicans and Aspergillus fumigatus of 0.63 ug/ml and 0.16 ug/ml, repectively, FR901469 displays greater inhibitory activity than other 1,3-beta-glucan synthase inhibitors such as, WF11899A, echinocandin B, aculeacin A, and papulacandin B (PubMed:11099224, PubMed:11099225).</text>
</comment>
<comment type="similarity">
    <text evidence="5">Belongs to the AMT4 thioesterase family.</text>
</comment>
<feature type="chain" id="PRO_0000454573" description="Thioesterase frbD">
    <location>
        <begin position="1"/>
        <end position="261"/>
    </location>
</feature>
<sequence>MTDSPAPRASVQLIQTGGAAMPLVLIHDACGTIYTYHALSKLGRTVYGIGNPRFEKCTSWTGGIGEMAACYHAAIKQRIRRGKILVGGWSLGGVIALEIARLFADDAAIHVHGVVLIDSPFPSKATVTGEDLQLPPLPPGLPANRRQSVAFAMREAVDLLGDWDPKASWQRADKKPPPAALIRALDYLPGSSADAQRDEFLVDRMRTQKLLGWENSGLDFIRATYEAPGHHWGIFSSENVACLSDTLSKACAELEVVDGGR</sequence>
<name>FRBD_DOTX1</name>
<reference key="1">
    <citation type="journal article" date="2015" name="Genome Announc.">
        <title>Genome sequence of fungal species No.11243, which produces the antifungal antibiotic FR901469.</title>
        <authorList>
            <person name="Matsui M."/>
            <person name="Yokoyama T."/>
            <person name="Nemoto K."/>
            <person name="Kumagai T."/>
            <person name="Terai G."/>
            <person name="Arita M."/>
            <person name="Machida M."/>
            <person name="Shibata T."/>
        </authorList>
    </citation>
    <scope>NUCLEOTIDE SEQUENCE [LARGE SCALE GENOMIC DNA]</scope>
</reference>
<reference key="2">
    <citation type="journal article" date="2000" name="J. Antibiot.">
        <title>FR901469, a novel antifungal antibiotic from an unidentified fungus No.11243. I. Taxonomy, fermentation, isolation, physico-chemical properties and biological properties.</title>
        <authorList>
            <person name="Fujie A."/>
            <person name="Iwamoto T."/>
            <person name="Muramatsu H."/>
            <person name="Okudaira T."/>
            <person name="Nitta K."/>
            <person name="Nakanishi T."/>
            <person name="Sakamoto K."/>
            <person name="Hori Y."/>
            <person name="Hino M."/>
            <person name="Hashimoto S."/>
            <person name="Okuhara M."/>
        </authorList>
    </citation>
    <scope>BIOTECHNOLOGY</scope>
</reference>
<reference key="3">
    <citation type="journal article" date="2000" name="J. Antibiot.">
        <title>FR901469, a novel antifungal antibiotic from an unidentified fungus No.11243. II. In vitro and in vivo activities.</title>
        <authorList>
            <person name="Fujie A."/>
            <person name="Iwamoto T."/>
            <person name="Muramatsu H."/>
            <person name="Okudaira T."/>
            <person name="Sato I."/>
            <person name="Furuta T."/>
            <person name="Tsurumi Y."/>
            <person name="Hori Y."/>
            <person name="Hino M."/>
            <person name="Hashimoto S."/>
            <person name="Okuhara M."/>
        </authorList>
    </citation>
    <scope>BIOTECHNOLOGY</scope>
</reference>
<reference key="4">
    <citation type="journal article" date="2017" name="J. Biosci. Bioeng.">
        <title>Identification of a putative FR901469 biosynthesis gene cluster in fungal sp. No. 11243 and enhancement of the productivity by overexpressing the transcription factor gene frbF.</title>
        <authorList>
            <person name="Matsui M."/>
            <person name="Yokoyama T."/>
            <person name="Nemoto K."/>
            <person name="Kumagai T."/>
            <person name="Terai G."/>
            <person name="Tamano K."/>
            <person name="Machida M."/>
            <person name="Shibata T."/>
        </authorList>
    </citation>
    <scope>FUNCTION</scope>
    <scope>PATHWAY</scope>
</reference>
<evidence type="ECO:0000269" key="1">
    <source>
    </source>
</evidence>
<evidence type="ECO:0000269" key="2">
    <source>
    </source>
</evidence>
<evidence type="ECO:0000269" key="3">
    <source>
    </source>
</evidence>
<evidence type="ECO:0000303" key="4">
    <source>
    </source>
</evidence>
<evidence type="ECO:0000305" key="5"/>
<evidence type="ECO:0000305" key="6">
    <source>
    </source>
</evidence>